<accession>B2SUB2</accession>
<dbReference type="EC" id="3.1.3.5" evidence="1"/>
<dbReference type="EMBL" id="CP000967">
    <property type="protein sequence ID" value="ACD58302.1"/>
    <property type="molecule type" value="Genomic_DNA"/>
</dbReference>
<dbReference type="RefSeq" id="WP_011408892.1">
    <property type="nucleotide sequence ID" value="NC_010717.2"/>
</dbReference>
<dbReference type="SMR" id="B2SUB2"/>
<dbReference type="KEGG" id="xop:PXO_00165"/>
<dbReference type="eggNOG" id="COG0496">
    <property type="taxonomic scope" value="Bacteria"/>
</dbReference>
<dbReference type="HOGENOM" id="CLU_045192_1_2_6"/>
<dbReference type="Proteomes" id="UP000001740">
    <property type="component" value="Chromosome"/>
</dbReference>
<dbReference type="GO" id="GO:0005737">
    <property type="term" value="C:cytoplasm"/>
    <property type="evidence" value="ECO:0007669"/>
    <property type="project" value="UniProtKB-SubCell"/>
</dbReference>
<dbReference type="GO" id="GO:0008254">
    <property type="term" value="F:3'-nucleotidase activity"/>
    <property type="evidence" value="ECO:0007669"/>
    <property type="project" value="TreeGrafter"/>
</dbReference>
<dbReference type="GO" id="GO:0008253">
    <property type="term" value="F:5'-nucleotidase activity"/>
    <property type="evidence" value="ECO:0007669"/>
    <property type="project" value="UniProtKB-UniRule"/>
</dbReference>
<dbReference type="GO" id="GO:0004309">
    <property type="term" value="F:exopolyphosphatase activity"/>
    <property type="evidence" value="ECO:0007669"/>
    <property type="project" value="TreeGrafter"/>
</dbReference>
<dbReference type="GO" id="GO:0046872">
    <property type="term" value="F:metal ion binding"/>
    <property type="evidence" value="ECO:0007669"/>
    <property type="project" value="UniProtKB-UniRule"/>
</dbReference>
<dbReference type="GO" id="GO:0000166">
    <property type="term" value="F:nucleotide binding"/>
    <property type="evidence" value="ECO:0007669"/>
    <property type="project" value="UniProtKB-KW"/>
</dbReference>
<dbReference type="FunFam" id="3.40.1210.10:FF:000001">
    <property type="entry name" value="5'/3'-nucleotidase SurE"/>
    <property type="match status" value="1"/>
</dbReference>
<dbReference type="Gene3D" id="3.40.1210.10">
    <property type="entry name" value="Survival protein SurE-like phosphatase/nucleotidase"/>
    <property type="match status" value="1"/>
</dbReference>
<dbReference type="HAMAP" id="MF_00060">
    <property type="entry name" value="SurE"/>
    <property type="match status" value="1"/>
</dbReference>
<dbReference type="InterPro" id="IPR030048">
    <property type="entry name" value="SurE"/>
</dbReference>
<dbReference type="InterPro" id="IPR002828">
    <property type="entry name" value="SurE-like_Pase/nucleotidase"/>
</dbReference>
<dbReference type="InterPro" id="IPR036523">
    <property type="entry name" value="SurE-like_sf"/>
</dbReference>
<dbReference type="NCBIfam" id="NF001489">
    <property type="entry name" value="PRK00346.1-3"/>
    <property type="match status" value="1"/>
</dbReference>
<dbReference type="NCBIfam" id="NF001490">
    <property type="entry name" value="PRK00346.1-4"/>
    <property type="match status" value="1"/>
</dbReference>
<dbReference type="NCBIfam" id="TIGR00087">
    <property type="entry name" value="surE"/>
    <property type="match status" value="1"/>
</dbReference>
<dbReference type="PANTHER" id="PTHR30457">
    <property type="entry name" value="5'-NUCLEOTIDASE SURE"/>
    <property type="match status" value="1"/>
</dbReference>
<dbReference type="PANTHER" id="PTHR30457:SF12">
    <property type="entry name" value="5'_3'-NUCLEOTIDASE SURE"/>
    <property type="match status" value="1"/>
</dbReference>
<dbReference type="Pfam" id="PF01975">
    <property type="entry name" value="SurE"/>
    <property type="match status" value="1"/>
</dbReference>
<dbReference type="SUPFAM" id="SSF64167">
    <property type="entry name" value="SurE-like"/>
    <property type="match status" value="1"/>
</dbReference>
<name>SURE_XANOP</name>
<sequence length="259" mass="27331">MRVLVSNDDGVDAPGIQILAEALRHGGHEVMVVAPDRDRSGASNSLTLDVPIRTRRIDAQTCAVAGTPTDCVHLALTGMLDCDPDIVVSGINNSANLGDDVIYSGTVSAAMEGRFLGLPAVAVSLVTHNHQAHHYDTAARAAVEIVARLKADPLPADTILNVNVPDLAWSDVLGFEVTRLGNRHRSEPCVPQRDPRGRTVYWIGPAGPEQDAGAGTDFHAVRTGHISITPIHVDLTRYQALETVAGWVGGLTAALDGPA</sequence>
<comment type="function">
    <text evidence="1">Nucleotidase that shows phosphatase activity on nucleoside 5'-monophosphates.</text>
</comment>
<comment type="catalytic activity">
    <reaction evidence="1">
        <text>a ribonucleoside 5'-phosphate + H2O = a ribonucleoside + phosphate</text>
        <dbReference type="Rhea" id="RHEA:12484"/>
        <dbReference type="ChEBI" id="CHEBI:15377"/>
        <dbReference type="ChEBI" id="CHEBI:18254"/>
        <dbReference type="ChEBI" id="CHEBI:43474"/>
        <dbReference type="ChEBI" id="CHEBI:58043"/>
        <dbReference type="EC" id="3.1.3.5"/>
    </reaction>
</comment>
<comment type="cofactor">
    <cofactor evidence="1">
        <name>a divalent metal cation</name>
        <dbReference type="ChEBI" id="CHEBI:60240"/>
    </cofactor>
    <text evidence="1">Binds 1 divalent metal cation per subunit.</text>
</comment>
<comment type="subcellular location">
    <subcellularLocation>
        <location evidence="1">Cytoplasm</location>
    </subcellularLocation>
</comment>
<comment type="similarity">
    <text evidence="1">Belongs to the SurE nucleotidase family.</text>
</comment>
<reference key="1">
    <citation type="journal article" date="2008" name="BMC Genomics">
        <title>Genome sequence and rapid evolution of the rice pathogen Xanthomonas oryzae pv. oryzae PXO99A.</title>
        <authorList>
            <person name="Salzberg S.L."/>
            <person name="Sommer D.D."/>
            <person name="Schatz M.C."/>
            <person name="Phillippy A.M."/>
            <person name="Rabinowicz P.D."/>
            <person name="Tsuge S."/>
            <person name="Furutani A."/>
            <person name="Ochiai H."/>
            <person name="Delcher A.L."/>
            <person name="Kelley D."/>
            <person name="Madupu R."/>
            <person name="Puiu D."/>
            <person name="Radune D."/>
            <person name="Shumway M."/>
            <person name="Trapnell C."/>
            <person name="Aparna G."/>
            <person name="Jha G."/>
            <person name="Pandey A."/>
            <person name="Patil P.B."/>
            <person name="Ishihara H."/>
            <person name="Meyer D.F."/>
            <person name="Szurek B."/>
            <person name="Verdier V."/>
            <person name="Koebnik R."/>
            <person name="Dow J.M."/>
            <person name="Ryan R.P."/>
            <person name="Hirata H."/>
            <person name="Tsuyumu S."/>
            <person name="Won Lee S."/>
            <person name="Seo Y.-S."/>
            <person name="Sriariyanum M."/>
            <person name="Ronald P.C."/>
            <person name="Sonti R.V."/>
            <person name="Van Sluys M.-A."/>
            <person name="Leach J.E."/>
            <person name="White F.F."/>
            <person name="Bogdanove A.J."/>
        </authorList>
    </citation>
    <scope>NUCLEOTIDE SEQUENCE [LARGE SCALE GENOMIC DNA]</scope>
    <source>
        <strain>PXO99A</strain>
    </source>
</reference>
<proteinExistence type="inferred from homology"/>
<protein>
    <recommendedName>
        <fullName evidence="1">5'-nucleotidase SurE</fullName>
        <ecNumber evidence="1">3.1.3.5</ecNumber>
    </recommendedName>
    <alternativeName>
        <fullName evidence="1">Nucleoside 5'-monophosphate phosphohydrolase</fullName>
    </alternativeName>
</protein>
<keyword id="KW-0963">Cytoplasm</keyword>
<keyword id="KW-0378">Hydrolase</keyword>
<keyword id="KW-0479">Metal-binding</keyword>
<keyword id="KW-0547">Nucleotide-binding</keyword>
<evidence type="ECO:0000255" key="1">
    <source>
        <dbReference type="HAMAP-Rule" id="MF_00060"/>
    </source>
</evidence>
<gene>
    <name evidence="1" type="primary">surE</name>
    <name type="ordered locus">PXO_00165</name>
</gene>
<feature type="chain" id="PRO_1000092048" description="5'-nucleotidase SurE">
    <location>
        <begin position="1"/>
        <end position="259"/>
    </location>
</feature>
<feature type="binding site" evidence="1">
    <location>
        <position position="8"/>
    </location>
    <ligand>
        <name>a divalent metal cation</name>
        <dbReference type="ChEBI" id="CHEBI:60240"/>
    </ligand>
</feature>
<feature type="binding site" evidence="1">
    <location>
        <position position="9"/>
    </location>
    <ligand>
        <name>a divalent metal cation</name>
        <dbReference type="ChEBI" id="CHEBI:60240"/>
    </ligand>
</feature>
<feature type="binding site" evidence="1">
    <location>
        <position position="40"/>
    </location>
    <ligand>
        <name>a divalent metal cation</name>
        <dbReference type="ChEBI" id="CHEBI:60240"/>
    </ligand>
</feature>
<feature type="binding site" evidence="1">
    <location>
        <position position="92"/>
    </location>
    <ligand>
        <name>a divalent metal cation</name>
        <dbReference type="ChEBI" id="CHEBI:60240"/>
    </ligand>
</feature>
<organism>
    <name type="scientific">Xanthomonas oryzae pv. oryzae (strain PXO99A)</name>
    <dbReference type="NCBI Taxonomy" id="360094"/>
    <lineage>
        <taxon>Bacteria</taxon>
        <taxon>Pseudomonadati</taxon>
        <taxon>Pseudomonadota</taxon>
        <taxon>Gammaproteobacteria</taxon>
        <taxon>Lysobacterales</taxon>
        <taxon>Lysobacteraceae</taxon>
        <taxon>Xanthomonas</taxon>
    </lineage>
</organism>